<sequence>MGAILGKKIGMTRLYNNKREAVPCTVIQAGPCFVAQVKSTEKDGYDAYQLGFGERDEKKVTKPLAGHYKKAGKTPGYLLSEVSKSLIAGELEAGATVAVDVFTEGEIVDVLGVTKGKGFAGVVKRHNFGGGSRTHGQSDRLRAPGSVGGSSDPSRTFKGTRMAGRMGGENKTVRNLEIVKVMPESNLIVVKGAVPGPKNSYVKIVSTTK</sequence>
<organism>
    <name type="scientific">Chlorobaculum parvum (strain DSM 263 / NCIMB 8327)</name>
    <name type="common">Chlorobium vibrioforme subsp. thiosulfatophilum</name>
    <dbReference type="NCBI Taxonomy" id="517417"/>
    <lineage>
        <taxon>Bacteria</taxon>
        <taxon>Pseudomonadati</taxon>
        <taxon>Chlorobiota</taxon>
        <taxon>Chlorobiia</taxon>
        <taxon>Chlorobiales</taxon>
        <taxon>Chlorobiaceae</taxon>
        <taxon>Chlorobaculum</taxon>
    </lineage>
</organism>
<comment type="function">
    <text evidence="1">One of the primary rRNA binding proteins, it binds directly near the 3'-end of the 23S rRNA, where it nucleates assembly of the 50S subunit.</text>
</comment>
<comment type="subunit">
    <text evidence="1">Part of the 50S ribosomal subunit. Forms a cluster with proteins L14 and L19.</text>
</comment>
<comment type="similarity">
    <text evidence="1">Belongs to the universal ribosomal protein uL3 family.</text>
</comment>
<dbReference type="EMBL" id="CP001099">
    <property type="protein sequence ID" value="ACF10604.1"/>
    <property type="molecule type" value="Genomic_DNA"/>
</dbReference>
<dbReference type="RefSeq" id="WP_012501439.1">
    <property type="nucleotide sequence ID" value="NC_011027.1"/>
</dbReference>
<dbReference type="SMR" id="B3QR75"/>
<dbReference type="STRING" id="517417.Cpar_0177"/>
<dbReference type="KEGG" id="cpc:Cpar_0177"/>
<dbReference type="eggNOG" id="COG0087">
    <property type="taxonomic scope" value="Bacteria"/>
</dbReference>
<dbReference type="HOGENOM" id="CLU_044142_4_1_10"/>
<dbReference type="OrthoDB" id="9806135at2"/>
<dbReference type="Proteomes" id="UP000008811">
    <property type="component" value="Chromosome"/>
</dbReference>
<dbReference type="GO" id="GO:0022625">
    <property type="term" value="C:cytosolic large ribosomal subunit"/>
    <property type="evidence" value="ECO:0007669"/>
    <property type="project" value="TreeGrafter"/>
</dbReference>
<dbReference type="GO" id="GO:0019843">
    <property type="term" value="F:rRNA binding"/>
    <property type="evidence" value="ECO:0007669"/>
    <property type="project" value="UniProtKB-UniRule"/>
</dbReference>
<dbReference type="GO" id="GO:0003735">
    <property type="term" value="F:structural constituent of ribosome"/>
    <property type="evidence" value="ECO:0007669"/>
    <property type="project" value="InterPro"/>
</dbReference>
<dbReference type="GO" id="GO:0006412">
    <property type="term" value="P:translation"/>
    <property type="evidence" value="ECO:0007669"/>
    <property type="project" value="UniProtKB-UniRule"/>
</dbReference>
<dbReference type="FunFam" id="2.40.30.10:FF:000004">
    <property type="entry name" value="50S ribosomal protein L3"/>
    <property type="match status" value="1"/>
</dbReference>
<dbReference type="FunFam" id="3.30.160.810:FF:000001">
    <property type="entry name" value="50S ribosomal protein L3"/>
    <property type="match status" value="1"/>
</dbReference>
<dbReference type="Gene3D" id="3.30.160.810">
    <property type="match status" value="1"/>
</dbReference>
<dbReference type="Gene3D" id="2.40.30.10">
    <property type="entry name" value="Translation factors"/>
    <property type="match status" value="1"/>
</dbReference>
<dbReference type="HAMAP" id="MF_01325_B">
    <property type="entry name" value="Ribosomal_uL3_B"/>
    <property type="match status" value="1"/>
</dbReference>
<dbReference type="InterPro" id="IPR000597">
    <property type="entry name" value="Ribosomal_uL3"/>
</dbReference>
<dbReference type="InterPro" id="IPR019927">
    <property type="entry name" value="Ribosomal_uL3_bac/org-type"/>
</dbReference>
<dbReference type="InterPro" id="IPR019926">
    <property type="entry name" value="Ribosomal_uL3_CS"/>
</dbReference>
<dbReference type="InterPro" id="IPR009000">
    <property type="entry name" value="Transl_B-barrel_sf"/>
</dbReference>
<dbReference type="NCBIfam" id="TIGR03625">
    <property type="entry name" value="L3_bact"/>
    <property type="match status" value="1"/>
</dbReference>
<dbReference type="PANTHER" id="PTHR11229">
    <property type="entry name" value="50S RIBOSOMAL PROTEIN L3"/>
    <property type="match status" value="1"/>
</dbReference>
<dbReference type="PANTHER" id="PTHR11229:SF16">
    <property type="entry name" value="LARGE RIBOSOMAL SUBUNIT PROTEIN UL3C"/>
    <property type="match status" value="1"/>
</dbReference>
<dbReference type="Pfam" id="PF00297">
    <property type="entry name" value="Ribosomal_L3"/>
    <property type="match status" value="1"/>
</dbReference>
<dbReference type="SUPFAM" id="SSF50447">
    <property type="entry name" value="Translation proteins"/>
    <property type="match status" value="1"/>
</dbReference>
<dbReference type="PROSITE" id="PS00474">
    <property type="entry name" value="RIBOSOMAL_L3"/>
    <property type="match status" value="1"/>
</dbReference>
<reference key="1">
    <citation type="submission" date="2008-06" db="EMBL/GenBank/DDBJ databases">
        <title>Complete sequence of Chlorobaculum parvum NCIB 8327.</title>
        <authorList>
            <consortium name="US DOE Joint Genome Institute"/>
            <person name="Lucas S."/>
            <person name="Copeland A."/>
            <person name="Lapidus A."/>
            <person name="Glavina del Rio T."/>
            <person name="Dalin E."/>
            <person name="Tice H."/>
            <person name="Bruce D."/>
            <person name="Goodwin L."/>
            <person name="Pitluck S."/>
            <person name="Schmutz J."/>
            <person name="Larimer F."/>
            <person name="Land M."/>
            <person name="Hauser L."/>
            <person name="Kyrpides N."/>
            <person name="Mikhailova N."/>
            <person name="Zhao F."/>
            <person name="Li T."/>
            <person name="Liu Z."/>
            <person name="Overmann J."/>
            <person name="Bryant D.A."/>
            <person name="Richardson P."/>
        </authorList>
    </citation>
    <scope>NUCLEOTIDE SEQUENCE [LARGE SCALE GENOMIC DNA]</scope>
    <source>
        <strain>DSM 263 / NCIMB 8327</strain>
    </source>
</reference>
<name>RL3_CHLP8</name>
<accession>B3QR75</accession>
<protein>
    <recommendedName>
        <fullName evidence="1">Large ribosomal subunit protein uL3</fullName>
    </recommendedName>
    <alternativeName>
        <fullName evidence="3">50S ribosomal protein L3</fullName>
    </alternativeName>
</protein>
<proteinExistence type="inferred from homology"/>
<evidence type="ECO:0000255" key="1">
    <source>
        <dbReference type="HAMAP-Rule" id="MF_01325"/>
    </source>
</evidence>
<evidence type="ECO:0000256" key="2">
    <source>
        <dbReference type="SAM" id="MobiDB-lite"/>
    </source>
</evidence>
<evidence type="ECO:0000305" key="3"/>
<keyword id="KW-0687">Ribonucleoprotein</keyword>
<keyword id="KW-0689">Ribosomal protein</keyword>
<keyword id="KW-0694">RNA-binding</keyword>
<keyword id="KW-0699">rRNA-binding</keyword>
<feature type="chain" id="PRO_1000141839" description="Large ribosomal subunit protein uL3">
    <location>
        <begin position="1"/>
        <end position="209"/>
    </location>
</feature>
<feature type="region of interest" description="Disordered" evidence="2">
    <location>
        <begin position="128"/>
        <end position="166"/>
    </location>
</feature>
<gene>
    <name evidence="1" type="primary">rplC</name>
    <name type="ordered locus">Cpar_0177</name>
</gene>